<proteinExistence type="inferred from homology"/>
<comment type="function">
    <text evidence="1">Binds the lower part of the 30S subunit head. Binds mRNA in the 70S ribosome, positioning it for translation.</text>
</comment>
<comment type="subunit">
    <text evidence="1">Part of the 30S ribosomal subunit. Forms a tight complex with proteins S10 and S14.</text>
</comment>
<comment type="similarity">
    <text evidence="1">Belongs to the universal ribosomal protein uS3 family.</text>
</comment>
<keyword id="KW-1185">Reference proteome</keyword>
<keyword id="KW-0687">Ribonucleoprotein</keyword>
<keyword id="KW-0689">Ribosomal protein</keyword>
<keyword id="KW-0694">RNA-binding</keyword>
<keyword id="KW-0699">rRNA-binding</keyword>
<dbReference type="EMBL" id="CP000830">
    <property type="protein sequence ID" value="ABV92037.1"/>
    <property type="molecule type" value="Genomic_DNA"/>
</dbReference>
<dbReference type="RefSeq" id="WP_012176968.1">
    <property type="nucleotide sequence ID" value="NC_009952.1"/>
</dbReference>
<dbReference type="SMR" id="A8LM60"/>
<dbReference type="STRING" id="398580.Dshi_0288"/>
<dbReference type="KEGG" id="dsh:Dshi_0288"/>
<dbReference type="eggNOG" id="COG0092">
    <property type="taxonomic scope" value="Bacteria"/>
</dbReference>
<dbReference type="HOGENOM" id="CLU_058591_0_2_5"/>
<dbReference type="OrthoDB" id="9806396at2"/>
<dbReference type="Proteomes" id="UP000006833">
    <property type="component" value="Chromosome"/>
</dbReference>
<dbReference type="GO" id="GO:0022627">
    <property type="term" value="C:cytosolic small ribosomal subunit"/>
    <property type="evidence" value="ECO:0007669"/>
    <property type="project" value="TreeGrafter"/>
</dbReference>
<dbReference type="GO" id="GO:0003729">
    <property type="term" value="F:mRNA binding"/>
    <property type="evidence" value="ECO:0007669"/>
    <property type="project" value="UniProtKB-UniRule"/>
</dbReference>
<dbReference type="GO" id="GO:0019843">
    <property type="term" value="F:rRNA binding"/>
    <property type="evidence" value="ECO:0007669"/>
    <property type="project" value="UniProtKB-UniRule"/>
</dbReference>
<dbReference type="GO" id="GO:0003735">
    <property type="term" value="F:structural constituent of ribosome"/>
    <property type="evidence" value="ECO:0007669"/>
    <property type="project" value="InterPro"/>
</dbReference>
<dbReference type="GO" id="GO:0006412">
    <property type="term" value="P:translation"/>
    <property type="evidence" value="ECO:0007669"/>
    <property type="project" value="UniProtKB-UniRule"/>
</dbReference>
<dbReference type="CDD" id="cd02412">
    <property type="entry name" value="KH-II_30S_S3"/>
    <property type="match status" value="1"/>
</dbReference>
<dbReference type="FunFam" id="3.30.1140.32:FF:000001">
    <property type="entry name" value="30S ribosomal protein S3"/>
    <property type="match status" value="1"/>
</dbReference>
<dbReference type="FunFam" id="3.30.300.20:FF:000001">
    <property type="entry name" value="30S ribosomal protein S3"/>
    <property type="match status" value="1"/>
</dbReference>
<dbReference type="Gene3D" id="3.30.300.20">
    <property type="match status" value="1"/>
</dbReference>
<dbReference type="Gene3D" id="3.30.1140.32">
    <property type="entry name" value="Ribosomal protein S3, C-terminal domain"/>
    <property type="match status" value="1"/>
</dbReference>
<dbReference type="HAMAP" id="MF_01309_B">
    <property type="entry name" value="Ribosomal_uS3_B"/>
    <property type="match status" value="1"/>
</dbReference>
<dbReference type="InterPro" id="IPR004087">
    <property type="entry name" value="KH_dom"/>
</dbReference>
<dbReference type="InterPro" id="IPR015946">
    <property type="entry name" value="KH_dom-like_a/b"/>
</dbReference>
<dbReference type="InterPro" id="IPR004044">
    <property type="entry name" value="KH_dom_type_2"/>
</dbReference>
<dbReference type="InterPro" id="IPR009019">
    <property type="entry name" value="KH_sf_prok-type"/>
</dbReference>
<dbReference type="InterPro" id="IPR036419">
    <property type="entry name" value="Ribosomal_S3_C_sf"/>
</dbReference>
<dbReference type="InterPro" id="IPR005704">
    <property type="entry name" value="Ribosomal_uS3_bac-typ"/>
</dbReference>
<dbReference type="InterPro" id="IPR001351">
    <property type="entry name" value="Ribosomal_uS3_C"/>
</dbReference>
<dbReference type="InterPro" id="IPR018280">
    <property type="entry name" value="Ribosomal_uS3_CS"/>
</dbReference>
<dbReference type="NCBIfam" id="TIGR01009">
    <property type="entry name" value="rpsC_bact"/>
    <property type="match status" value="1"/>
</dbReference>
<dbReference type="PANTHER" id="PTHR11760">
    <property type="entry name" value="30S/40S RIBOSOMAL PROTEIN S3"/>
    <property type="match status" value="1"/>
</dbReference>
<dbReference type="PANTHER" id="PTHR11760:SF19">
    <property type="entry name" value="SMALL RIBOSOMAL SUBUNIT PROTEIN US3C"/>
    <property type="match status" value="1"/>
</dbReference>
<dbReference type="Pfam" id="PF07650">
    <property type="entry name" value="KH_2"/>
    <property type="match status" value="1"/>
</dbReference>
<dbReference type="Pfam" id="PF00189">
    <property type="entry name" value="Ribosomal_S3_C"/>
    <property type="match status" value="1"/>
</dbReference>
<dbReference type="SMART" id="SM00322">
    <property type="entry name" value="KH"/>
    <property type="match status" value="1"/>
</dbReference>
<dbReference type="SUPFAM" id="SSF54814">
    <property type="entry name" value="Prokaryotic type KH domain (KH-domain type II)"/>
    <property type="match status" value="1"/>
</dbReference>
<dbReference type="SUPFAM" id="SSF54821">
    <property type="entry name" value="Ribosomal protein S3 C-terminal domain"/>
    <property type="match status" value="1"/>
</dbReference>
<dbReference type="PROSITE" id="PS50823">
    <property type="entry name" value="KH_TYPE_2"/>
    <property type="match status" value="1"/>
</dbReference>
<dbReference type="PROSITE" id="PS00548">
    <property type="entry name" value="RIBOSOMAL_S3"/>
    <property type="match status" value="1"/>
</dbReference>
<evidence type="ECO:0000255" key="1">
    <source>
        <dbReference type="HAMAP-Rule" id="MF_01309"/>
    </source>
</evidence>
<evidence type="ECO:0000256" key="2">
    <source>
        <dbReference type="SAM" id="MobiDB-lite"/>
    </source>
</evidence>
<evidence type="ECO:0000305" key="3"/>
<sequence length="240" mass="27184">MGNKVNPIGMRLQVNRTWDSRWYADTKDYGDLLLEDLKIREFIKEECKQAGISRVIIERPHKKCRVTIHTARPGVIIGKKGADIEGLRRKIAAMTDSELHLNIVEVRKPELDAALVGESIAQQLERRVSFRRAMKRAVQNAVRMGAQGIRVNLAGRLGGAEIARTEWYREGRVPLHTLRADIDFANVEATTAYGIIGIKVWIFKGEIMEHDPQARDRRHAELQEGGGPRPQGGGRPRRDR</sequence>
<protein>
    <recommendedName>
        <fullName evidence="1">Small ribosomal subunit protein uS3</fullName>
    </recommendedName>
    <alternativeName>
        <fullName evidence="3">30S ribosomal protein S3</fullName>
    </alternativeName>
</protein>
<accession>A8LM60</accession>
<organism>
    <name type="scientific">Dinoroseobacter shibae (strain DSM 16493 / NCIMB 14021 / DFL 12)</name>
    <dbReference type="NCBI Taxonomy" id="398580"/>
    <lineage>
        <taxon>Bacteria</taxon>
        <taxon>Pseudomonadati</taxon>
        <taxon>Pseudomonadota</taxon>
        <taxon>Alphaproteobacteria</taxon>
        <taxon>Rhodobacterales</taxon>
        <taxon>Roseobacteraceae</taxon>
        <taxon>Dinoroseobacter</taxon>
    </lineage>
</organism>
<name>RS3_DINSH</name>
<gene>
    <name evidence="1" type="primary">rpsC</name>
    <name type="ordered locus">Dshi_0288</name>
</gene>
<reference key="1">
    <citation type="journal article" date="2010" name="ISME J.">
        <title>The complete genome sequence of the algal symbiont Dinoroseobacter shibae: a hitchhiker's guide to life in the sea.</title>
        <authorList>
            <person name="Wagner-Dobler I."/>
            <person name="Ballhausen B."/>
            <person name="Berger M."/>
            <person name="Brinkhoff T."/>
            <person name="Buchholz I."/>
            <person name="Bunk B."/>
            <person name="Cypionka H."/>
            <person name="Daniel R."/>
            <person name="Drepper T."/>
            <person name="Gerdts G."/>
            <person name="Hahnke S."/>
            <person name="Han C."/>
            <person name="Jahn D."/>
            <person name="Kalhoefer D."/>
            <person name="Kiss H."/>
            <person name="Klenk H.P."/>
            <person name="Kyrpides N."/>
            <person name="Liebl W."/>
            <person name="Liesegang H."/>
            <person name="Meincke L."/>
            <person name="Pati A."/>
            <person name="Petersen J."/>
            <person name="Piekarski T."/>
            <person name="Pommerenke C."/>
            <person name="Pradella S."/>
            <person name="Pukall R."/>
            <person name="Rabus R."/>
            <person name="Stackebrandt E."/>
            <person name="Thole S."/>
            <person name="Thompson L."/>
            <person name="Tielen P."/>
            <person name="Tomasch J."/>
            <person name="von Jan M."/>
            <person name="Wanphrut N."/>
            <person name="Wichels A."/>
            <person name="Zech H."/>
            <person name="Simon M."/>
        </authorList>
    </citation>
    <scope>NUCLEOTIDE SEQUENCE [LARGE SCALE GENOMIC DNA]</scope>
    <source>
        <strain>DSM 16493 / NCIMB 14021 / DFL 12</strain>
    </source>
</reference>
<feature type="chain" id="PRO_1000086115" description="Small ribosomal subunit protein uS3">
    <location>
        <begin position="1"/>
        <end position="240"/>
    </location>
</feature>
<feature type="domain" description="KH type-2" evidence="1">
    <location>
        <begin position="39"/>
        <end position="107"/>
    </location>
</feature>
<feature type="region of interest" description="Disordered" evidence="2">
    <location>
        <begin position="212"/>
        <end position="240"/>
    </location>
</feature>
<feature type="compositionally biased region" description="Basic and acidic residues" evidence="2">
    <location>
        <begin position="212"/>
        <end position="222"/>
    </location>
</feature>
<feature type="compositionally biased region" description="Gly residues" evidence="2">
    <location>
        <begin position="224"/>
        <end position="234"/>
    </location>
</feature>